<evidence type="ECO:0000255" key="1">
    <source>
        <dbReference type="HAMAP-Rule" id="MF_00011"/>
    </source>
</evidence>
<sequence length="429" mass="46506">MANVTVIGAQWGDEGKGKIVDWLAERAHVVVRFQGGHNAGHTLVVGNQTYKLSLLPSGIVRGTLSVIGNGVVFDPWHFRDEVAKLQGQGVTITPDNLQIAETAPLILPFHRDLDGLREDASGSGKIGTTRRGIGPAYEDKVGRRAIRVCDLAHLDDLELQLDRICAHHDALRAGFNEPPIDREALKAQLAEIADFILPFAKPVWLTLNEARKAGRRILFEGAQGVLLDIDHGTYPFVTSSNTIAGTASGGSGLGPSAAGFVLGIVKAYTTRVGSGPFPSELEDEMGQRLGERGHEFGTVTGRKRRCGWFDAVLVRQSAAVSGITGVALTKLDVLDGFDEIKICTGYELDGKTYDYLPPHPQDQARVTPIYETIEGWSQSTAGARSWAELPAQAIKYIRRVEELIQCPVALVSTSPEREDTILVRDPFAD</sequence>
<comment type="function">
    <text evidence="1">Plays an important role in the de novo pathway of purine nucleotide biosynthesis. Catalyzes the first committed step in the biosynthesis of AMP from IMP.</text>
</comment>
<comment type="catalytic activity">
    <reaction evidence="1">
        <text>IMP + L-aspartate + GTP = N(6)-(1,2-dicarboxyethyl)-AMP + GDP + phosphate + 2 H(+)</text>
        <dbReference type="Rhea" id="RHEA:15753"/>
        <dbReference type="ChEBI" id="CHEBI:15378"/>
        <dbReference type="ChEBI" id="CHEBI:29991"/>
        <dbReference type="ChEBI" id="CHEBI:37565"/>
        <dbReference type="ChEBI" id="CHEBI:43474"/>
        <dbReference type="ChEBI" id="CHEBI:57567"/>
        <dbReference type="ChEBI" id="CHEBI:58053"/>
        <dbReference type="ChEBI" id="CHEBI:58189"/>
        <dbReference type="EC" id="6.3.4.4"/>
    </reaction>
</comment>
<comment type="cofactor">
    <cofactor evidence="1">
        <name>Mg(2+)</name>
        <dbReference type="ChEBI" id="CHEBI:18420"/>
    </cofactor>
    <text evidence="1">Binds 1 Mg(2+) ion per subunit.</text>
</comment>
<comment type="pathway">
    <text evidence="1">Purine metabolism; AMP biosynthesis via de novo pathway; AMP from IMP: step 1/2.</text>
</comment>
<comment type="subunit">
    <text evidence="1">Homodimer.</text>
</comment>
<comment type="subcellular location">
    <subcellularLocation>
        <location evidence="1">Cytoplasm</location>
    </subcellularLocation>
</comment>
<comment type="similarity">
    <text evidence="1">Belongs to the adenylosuccinate synthetase family.</text>
</comment>
<dbReference type="EC" id="6.3.4.4" evidence="1"/>
<dbReference type="EMBL" id="CP000699">
    <property type="protein sequence ID" value="ABQ71019.1"/>
    <property type="molecule type" value="Genomic_DNA"/>
</dbReference>
<dbReference type="SMR" id="A5VFF3"/>
<dbReference type="STRING" id="392499.Swit_4682"/>
<dbReference type="PaxDb" id="392499-Swit_4682"/>
<dbReference type="KEGG" id="swi:Swit_4682"/>
<dbReference type="eggNOG" id="COG0104">
    <property type="taxonomic scope" value="Bacteria"/>
</dbReference>
<dbReference type="HOGENOM" id="CLU_029848_0_0_5"/>
<dbReference type="OrthoDB" id="9807553at2"/>
<dbReference type="UniPathway" id="UPA00075">
    <property type="reaction ID" value="UER00335"/>
</dbReference>
<dbReference type="Proteomes" id="UP000001989">
    <property type="component" value="Chromosome"/>
</dbReference>
<dbReference type="GO" id="GO:0005737">
    <property type="term" value="C:cytoplasm"/>
    <property type="evidence" value="ECO:0007669"/>
    <property type="project" value="UniProtKB-SubCell"/>
</dbReference>
<dbReference type="GO" id="GO:0004019">
    <property type="term" value="F:adenylosuccinate synthase activity"/>
    <property type="evidence" value="ECO:0007669"/>
    <property type="project" value="UniProtKB-UniRule"/>
</dbReference>
<dbReference type="GO" id="GO:0005525">
    <property type="term" value="F:GTP binding"/>
    <property type="evidence" value="ECO:0007669"/>
    <property type="project" value="UniProtKB-UniRule"/>
</dbReference>
<dbReference type="GO" id="GO:0000287">
    <property type="term" value="F:magnesium ion binding"/>
    <property type="evidence" value="ECO:0007669"/>
    <property type="project" value="UniProtKB-UniRule"/>
</dbReference>
<dbReference type="GO" id="GO:0044208">
    <property type="term" value="P:'de novo' AMP biosynthetic process"/>
    <property type="evidence" value="ECO:0007669"/>
    <property type="project" value="UniProtKB-UniRule"/>
</dbReference>
<dbReference type="GO" id="GO:0046040">
    <property type="term" value="P:IMP metabolic process"/>
    <property type="evidence" value="ECO:0007669"/>
    <property type="project" value="TreeGrafter"/>
</dbReference>
<dbReference type="CDD" id="cd03108">
    <property type="entry name" value="AdSS"/>
    <property type="match status" value="1"/>
</dbReference>
<dbReference type="FunFam" id="1.10.300.10:FF:000001">
    <property type="entry name" value="Adenylosuccinate synthetase"/>
    <property type="match status" value="1"/>
</dbReference>
<dbReference type="FunFam" id="3.90.170.10:FF:000001">
    <property type="entry name" value="Adenylosuccinate synthetase"/>
    <property type="match status" value="1"/>
</dbReference>
<dbReference type="Gene3D" id="3.40.440.10">
    <property type="entry name" value="Adenylosuccinate Synthetase, subunit A, domain 1"/>
    <property type="match status" value="1"/>
</dbReference>
<dbReference type="Gene3D" id="1.10.300.10">
    <property type="entry name" value="Adenylosuccinate Synthetase, subunit A, domain 2"/>
    <property type="match status" value="1"/>
</dbReference>
<dbReference type="Gene3D" id="3.90.170.10">
    <property type="entry name" value="Adenylosuccinate Synthetase, subunit A, domain 3"/>
    <property type="match status" value="1"/>
</dbReference>
<dbReference type="HAMAP" id="MF_00011">
    <property type="entry name" value="Adenylosucc_synth"/>
    <property type="match status" value="1"/>
</dbReference>
<dbReference type="InterPro" id="IPR018220">
    <property type="entry name" value="Adenylosuccin_syn_GTP-bd"/>
</dbReference>
<dbReference type="InterPro" id="IPR033128">
    <property type="entry name" value="Adenylosuccin_syn_Lys_AS"/>
</dbReference>
<dbReference type="InterPro" id="IPR042109">
    <property type="entry name" value="Adenylosuccinate_synth_dom1"/>
</dbReference>
<dbReference type="InterPro" id="IPR042110">
    <property type="entry name" value="Adenylosuccinate_synth_dom2"/>
</dbReference>
<dbReference type="InterPro" id="IPR042111">
    <property type="entry name" value="Adenylosuccinate_synth_dom3"/>
</dbReference>
<dbReference type="InterPro" id="IPR001114">
    <property type="entry name" value="Adenylosuccinate_synthetase"/>
</dbReference>
<dbReference type="InterPro" id="IPR027417">
    <property type="entry name" value="P-loop_NTPase"/>
</dbReference>
<dbReference type="NCBIfam" id="NF002223">
    <property type="entry name" value="PRK01117.1"/>
    <property type="match status" value="1"/>
</dbReference>
<dbReference type="NCBIfam" id="TIGR00184">
    <property type="entry name" value="purA"/>
    <property type="match status" value="1"/>
</dbReference>
<dbReference type="PANTHER" id="PTHR11846">
    <property type="entry name" value="ADENYLOSUCCINATE SYNTHETASE"/>
    <property type="match status" value="1"/>
</dbReference>
<dbReference type="PANTHER" id="PTHR11846:SF0">
    <property type="entry name" value="ADENYLOSUCCINATE SYNTHETASE"/>
    <property type="match status" value="1"/>
</dbReference>
<dbReference type="Pfam" id="PF00709">
    <property type="entry name" value="Adenylsucc_synt"/>
    <property type="match status" value="1"/>
</dbReference>
<dbReference type="SMART" id="SM00788">
    <property type="entry name" value="Adenylsucc_synt"/>
    <property type="match status" value="1"/>
</dbReference>
<dbReference type="SUPFAM" id="SSF52540">
    <property type="entry name" value="P-loop containing nucleoside triphosphate hydrolases"/>
    <property type="match status" value="1"/>
</dbReference>
<dbReference type="PROSITE" id="PS01266">
    <property type="entry name" value="ADENYLOSUCCIN_SYN_1"/>
    <property type="match status" value="1"/>
</dbReference>
<dbReference type="PROSITE" id="PS00513">
    <property type="entry name" value="ADENYLOSUCCIN_SYN_2"/>
    <property type="match status" value="1"/>
</dbReference>
<reference key="1">
    <citation type="journal article" date="2010" name="J. Bacteriol.">
        <title>Genome sequence of the dioxin-mineralizing bacterium Sphingomonas wittichii RW1.</title>
        <authorList>
            <person name="Miller T.R."/>
            <person name="Delcher A.L."/>
            <person name="Salzberg S.L."/>
            <person name="Saunders E."/>
            <person name="Detter J.C."/>
            <person name="Halden R.U."/>
        </authorList>
    </citation>
    <scope>NUCLEOTIDE SEQUENCE [LARGE SCALE GENOMIC DNA]</scope>
    <source>
        <strain>DSM 6014 / CCUG 31198 / JCM 15750 / NBRC 105917 / EY 4224 / RW1</strain>
    </source>
</reference>
<protein>
    <recommendedName>
        <fullName evidence="1">Adenylosuccinate synthetase</fullName>
        <shortName evidence="1">AMPSase</shortName>
        <shortName evidence="1">AdSS</shortName>
        <ecNumber evidence="1">6.3.4.4</ecNumber>
    </recommendedName>
    <alternativeName>
        <fullName evidence="1">IMP--aspartate ligase</fullName>
    </alternativeName>
</protein>
<organism>
    <name type="scientific">Rhizorhabdus wittichii (strain DSM 6014 / CCUG 31198 / JCM 15750 / NBRC 105917 / EY 4224 / RW1)</name>
    <name type="common">Sphingomonas wittichii</name>
    <dbReference type="NCBI Taxonomy" id="392499"/>
    <lineage>
        <taxon>Bacteria</taxon>
        <taxon>Pseudomonadati</taxon>
        <taxon>Pseudomonadota</taxon>
        <taxon>Alphaproteobacteria</taxon>
        <taxon>Sphingomonadales</taxon>
        <taxon>Sphingomonadaceae</taxon>
        <taxon>Rhizorhabdus</taxon>
    </lineage>
</organism>
<name>PURA_RHIWR</name>
<proteinExistence type="inferred from homology"/>
<feature type="chain" id="PRO_1000000925" description="Adenylosuccinate synthetase">
    <location>
        <begin position="1"/>
        <end position="429"/>
    </location>
</feature>
<feature type="active site" description="Proton acceptor" evidence="1">
    <location>
        <position position="13"/>
    </location>
</feature>
<feature type="active site" description="Proton donor" evidence="1">
    <location>
        <position position="41"/>
    </location>
</feature>
<feature type="binding site" evidence="1">
    <location>
        <begin position="12"/>
        <end position="18"/>
    </location>
    <ligand>
        <name>GTP</name>
        <dbReference type="ChEBI" id="CHEBI:37565"/>
    </ligand>
</feature>
<feature type="binding site" description="in other chain" evidence="1">
    <location>
        <begin position="13"/>
        <end position="16"/>
    </location>
    <ligand>
        <name>IMP</name>
        <dbReference type="ChEBI" id="CHEBI:58053"/>
        <note>ligand shared between dimeric partners</note>
    </ligand>
</feature>
<feature type="binding site" evidence="1">
    <location>
        <position position="13"/>
    </location>
    <ligand>
        <name>Mg(2+)</name>
        <dbReference type="ChEBI" id="CHEBI:18420"/>
    </ligand>
</feature>
<feature type="binding site" description="in other chain" evidence="1">
    <location>
        <begin position="38"/>
        <end position="41"/>
    </location>
    <ligand>
        <name>IMP</name>
        <dbReference type="ChEBI" id="CHEBI:58053"/>
        <note>ligand shared between dimeric partners</note>
    </ligand>
</feature>
<feature type="binding site" evidence="1">
    <location>
        <begin position="40"/>
        <end position="42"/>
    </location>
    <ligand>
        <name>GTP</name>
        <dbReference type="ChEBI" id="CHEBI:37565"/>
    </ligand>
</feature>
<feature type="binding site" evidence="1">
    <location>
        <position position="40"/>
    </location>
    <ligand>
        <name>Mg(2+)</name>
        <dbReference type="ChEBI" id="CHEBI:18420"/>
    </ligand>
</feature>
<feature type="binding site" description="in other chain" evidence="1">
    <location>
        <position position="129"/>
    </location>
    <ligand>
        <name>IMP</name>
        <dbReference type="ChEBI" id="CHEBI:58053"/>
        <note>ligand shared between dimeric partners</note>
    </ligand>
</feature>
<feature type="binding site" evidence="1">
    <location>
        <position position="143"/>
    </location>
    <ligand>
        <name>IMP</name>
        <dbReference type="ChEBI" id="CHEBI:58053"/>
        <note>ligand shared between dimeric partners</note>
    </ligand>
</feature>
<feature type="binding site" description="in other chain" evidence="1">
    <location>
        <position position="223"/>
    </location>
    <ligand>
        <name>IMP</name>
        <dbReference type="ChEBI" id="CHEBI:58053"/>
        <note>ligand shared between dimeric partners</note>
    </ligand>
</feature>
<feature type="binding site" description="in other chain" evidence="1">
    <location>
        <position position="238"/>
    </location>
    <ligand>
        <name>IMP</name>
        <dbReference type="ChEBI" id="CHEBI:58053"/>
        <note>ligand shared between dimeric partners</note>
    </ligand>
</feature>
<feature type="binding site" evidence="1">
    <location>
        <begin position="298"/>
        <end position="304"/>
    </location>
    <ligand>
        <name>substrate</name>
    </ligand>
</feature>
<feature type="binding site" description="in other chain" evidence="1">
    <location>
        <position position="302"/>
    </location>
    <ligand>
        <name>IMP</name>
        <dbReference type="ChEBI" id="CHEBI:58053"/>
        <note>ligand shared between dimeric partners</note>
    </ligand>
</feature>
<feature type="binding site" evidence="1">
    <location>
        <position position="304"/>
    </location>
    <ligand>
        <name>GTP</name>
        <dbReference type="ChEBI" id="CHEBI:37565"/>
    </ligand>
</feature>
<feature type="binding site" evidence="1">
    <location>
        <begin position="330"/>
        <end position="332"/>
    </location>
    <ligand>
        <name>GTP</name>
        <dbReference type="ChEBI" id="CHEBI:37565"/>
    </ligand>
</feature>
<feature type="binding site" evidence="1">
    <location>
        <begin position="412"/>
        <end position="414"/>
    </location>
    <ligand>
        <name>GTP</name>
        <dbReference type="ChEBI" id="CHEBI:37565"/>
    </ligand>
</feature>
<gene>
    <name evidence="1" type="primary">purA</name>
    <name type="ordered locus">Swit_4682</name>
</gene>
<keyword id="KW-0963">Cytoplasm</keyword>
<keyword id="KW-0342">GTP-binding</keyword>
<keyword id="KW-0436">Ligase</keyword>
<keyword id="KW-0460">Magnesium</keyword>
<keyword id="KW-0479">Metal-binding</keyword>
<keyword id="KW-0547">Nucleotide-binding</keyword>
<keyword id="KW-0658">Purine biosynthesis</keyword>
<keyword id="KW-1185">Reference proteome</keyword>
<accession>A5VFF3</accession>